<gene>
    <name type="primary">Tes</name>
</gene>
<evidence type="ECO:0000250" key="1"/>
<evidence type="ECO:0000255" key="2">
    <source>
        <dbReference type="PROSITE-ProRule" id="PRU00125"/>
    </source>
</evidence>
<evidence type="ECO:0000255" key="3">
    <source>
        <dbReference type="PROSITE-ProRule" id="PRU00636"/>
    </source>
</evidence>
<evidence type="ECO:0000256" key="4">
    <source>
        <dbReference type="SAM" id="MobiDB-lite"/>
    </source>
</evidence>
<evidence type="ECO:0000269" key="5">
    <source>
    </source>
</evidence>
<evidence type="ECO:0000305" key="6"/>
<protein>
    <recommendedName>
        <fullName>Testin</fullName>
    </recommendedName>
</protein>
<keyword id="KW-0965">Cell junction</keyword>
<keyword id="KW-0963">Cytoplasm</keyword>
<keyword id="KW-0440">LIM domain</keyword>
<keyword id="KW-0479">Metal-binding</keyword>
<keyword id="KW-1185">Reference proteome</keyword>
<keyword id="KW-0677">Repeat</keyword>
<keyword id="KW-0862">Zinc</keyword>
<organism>
    <name type="scientific">Rattus norvegicus</name>
    <name type="common">Rat</name>
    <dbReference type="NCBI Taxonomy" id="10116"/>
    <lineage>
        <taxon>Eukaryota</taxon>
        <taxon>Metazoa</taxon>
        <taxon>Chordata</taxon>
        <taxon>Craniata</taxon>
        <taxon>Vertebrata</taxon>
        <taxon>Euteleostomi</taxon>
        <taxon>Mammalia</taxon>
        <taxon>Eutheria</taxon>
        <taxon>Euarchontoglires</taxon>
        <taxon>Glires</taxon>
        <taxon>Rodentia</taxon>
        <taxon>Myomorpha</taxon>
        <taxon>Muroidea</taxon>
        <taxon>Muridae</taxon>
        <taxon>Murinae</taxon>
        <taxon>Rattus</taxon>
    </lineage>
</organism>
<accession>Q2LAP6</accession>
<name>TES_RAT</name>
<dbReference type="EMBL" id="DQ339047">
    <property type="protein sequence ID" value="ABC68418.1"/>
    <property type="molecule type" value="mRNA"/>
</dbReference>
<dbReference type="EMBL" id="DP000027">
    <property type="protein sequence ID" value="ABC87757.1"/>
    <property type="molecule type" value="Genomic_DNA"/>
</dbReference>
<dbReference type="EMBL" id="BC129069">
    <property type="protein sequence ID" value="AAI29070.1"/>
    <property type="molecule type" value="mRNA"/>
</dbReference>
<dbReference type="RefSeq" id="NP_001034433.1">
    <property type="nucleotide sequence ID" value="NM_001039344.2"/>
</dbReference>
<dbReference type="SMR" id="Q2LAP6"/>
<dbReference type="BioGRID" id="271348">
    <property type="interactions" value="1"/>
</dbReference>
<dbReference type="FunCoup" id="Q2LAP6">
    <property type="interactions" value="875"/>
</dbReference>
<dbReference type="IntAct" id="Q2LAP6">
    <property type="interactions" value="2"/>
</dbReference>
<dbReference type="STRING" id="10116.ENSRNOP00000070338"/>
<dbReference type="iPTMnet" id="Q2LAP6"/>
<dbReference type="PhosphoSitePlus" id="Q2LAP6"/>
<dbReference type="jPOST" id="Q2LAP6"/>
<dbReference type="PaxDb" id="10116-ENSRNOP00000051294"/>
<dbReference type="Ensembl" id="ENSRNOT00000091095.2">
    <property type="protein sequence ID" value="ENSRNOP00000070338.1"/>
    <property type="gene ID" value="ENSRNOG00000051952.2"/>
</dbReference>
<dbReference type="GeneID" id="500040"/>
<dbReference type="KEGG" id="rno:500040"/>
<dbReference type="UCSC" id="RGD:1566346">
    <property type="organism name" value="rat"/>
</dbReference>
<dbReference type="AGR" id="RGD:1566346"/>
<dbReference type="CTD" id="26136"/>
<dbReference type="RGD" id="1566346">
    <property type="gene designation" value="Tes"/>
</dbReference>
<dbReference type="eggNOG" id="KOG1704">
    <property type="taxonomic scope" value="Eukaryota"/>
</dbReference>
<dbReference type="GeneTree" id="ENSGT00940000155993"/>
<dbReference type="HOGENOM" id="CLU_008937_1_1_1"/>
<dbReference type="InParanoid" id="Q2LAP6"/>
<dbReference type="OMA" id="PHMGPHS"/>
<dbReference type="OrthoDB" id="10069167at2759"/>
<dbReference type="PhylomeDB" id="Q2LAP6"/>
<dbReference type="TreeFam" id="TF313265"/>
<dbReference type="PRO" id="PR:Q2LAP6"/>
<dbReference type="Proteomes" id="UP000002494">
    <property type="component" value="Chromosome 4"/>
</dbReference>
<dbReference type="Bgee" id="ENSRNOG00000051952">
    <property type="expression patterns" value="Expressed in colon and 20 other cell types or tissues"/>
</dbReference>
<dbReference type="GO" id="GO:0005737">
    <property type="term" value="C:cytoplasm"/>
    <property type="evidence" value="ECO:0000250"/>
    <property type="project" value="UniProtKB"/>
</dbReference>
<dbReference type="GO" id="GO:0005925">
    <property type="term" value="C:focal adhesion"/>
    <property type="evidence" value="ECO:0007669"/>
    <property type="project" value="UniProtKB-SubCell"/>
</dbReference>
<dbReference type="GO" id="GO:0032991">
    <property type="term" value="C:protein-containing complex"/>
    <property type="evidence" value="ECO:0000266"/>
    <property type="project" value="RGD"/>
</dbReference>
<dbReference type="GO" id="GO:0008270">
    <property type="term" value="F:zinc ion binding"/>
    <property type="evidence" value="ECO:0000250"/>
    <property type="project" value="UniProtKB"/>
</dbReference>
<dbReference type="GO" id="GO:0008285">
    <property type="term" value="P:negative regulation of cell population proliferation"/>
    <property type="evidence" value="ECO:0000250"/>
    <property type="project" value="UniProtKB"/>
</dbReference>
<dbReference type="CDD" id="cd09413">
    <property type="entry name" value="LIM1_Testin"/>
    <property type="match status" value="1"/>
</dbReference>
<dbReference type="CDD" id="cd09416">
    <property type="entry name" value="LIM2_Testin"/>
    <property type="match status" value="1"/>
</dbReference>
<dbReference type="CDD" id="cd09419">
    <property type="entry name" value="LIM3_Testin"/>
    <property type="match status" value="1"/>
</dbReference>
<dbReference type="CDD" id="cd09829">
    <property type="entry name" value="PET_testin"/>
    <property type="match status" value="1"/>
</dbReference>
<dbReference type="FunFam" id="2.10.110.10:FF:000061">
    <property type="entry name" value="Testin"/>
    <property type="match status" value="1"/>
</dbReference>
<dbReference type="FunFam" id="2.10.110.10:FF:000065">
    <property type="entry name" value="Testin"/>
    <property type="match status" value="1"/>
</dbReference>
<dbReference type="FunFam" id="2.10.110.10:FF:000005">
    <property type="entry name" value="Testin isoform 1"/>
    <property type="match status" value="1"/>
</dbReference>
<dbReference type="Gene3D" id="2.10.110.10">
    <property type="entry name" value="Cysteine Rich Protein"/>
    <property type="match status" value="3"/>
</dbReference>
<dbReference type="InterPro" id="IPR034958">
    <property type="entry name" value="LIM1_Testin"/>
</dbReference>
<dbReference type="InterPro" id="IPR034959">
    <property type="entry name" value="LIM2_Testin"/>
</dbReference>
<dbReference type="InterPro" id="IPR034960">
    <property type="entry name" value="LIM3_Testin"/>
</dbReference>
<dbReference type="InterPro" id="IPR010442">
    <property type="entry name" value="PET_domain"/>
</dbReference>
<dbReference type="InterPro" id="IPR033724">
    <property type="entry name" value="PET_testin"/>
</dbReference>
<dbReference type="InterPro" id="IPR047120">
    <property type="entry name" value="Pk/Esn/Tes"/>
</dbReference>
<dbReference type="InterPro" id="IPR001781">
    <property type="entry name" value="Znf_LIM"/>
</dbReference>
<dbReference type="PANTHER" id="PTHR24211">
    <property type="entry name" value="LIM DOMAIN-CONTAINING PROTEIN"/>
    <property type="match status" value="1"/>
</dbReference>
<dbReference type="PANTHER" id="PTHR24211:SF1">
    <property type="entry name" value="TESTIN"/>
    <property type="match status" value="1"/>
</dbReference>
<dbReference type="Pfam" id="PF00412">
    <property type="entry name" value="LIM"/>
    <property type="match status" value="3"/>
</dbReference>
<dbReference type="Pfam" id="PF06297">
    <property type="entry name" value="PET"/>
    <property type="match status" value="1"/>
</dbReference>
<dbReference type="SMART" id="SM00132">
    <property type="entry name" value="LIM"/>
    <property type="match status" value="3"/>
</dbReference>
<dbReference type="SUPFAM" id="SSF57716">
    <property type="entry name" value="Glucocorticoid receptor-like (DNA-binding domain)"/>
    <property type="match status" value="2"/>
</dbReference>
<dbReference type="PROSITE" id="PS00478">
    <property type="entry name" value="LIM_DOMAIN_1"/>
    <property type="match status" value="2"/>
</dbReference>
<dbReference type="PROSITE" id="PS50023">
    <property type="entry name" value="LIM_DOMAIN_2"/>
    <property type="match status" value="3"/>
</dbReference>
<dbReference type="PROSITE" id="PS51303">
    <property type="entry name" value="PET"/>
    <property type="match status" value="1"/>
</dbReference>
<proteinExistence type="evidence at protein level"/>
<comment type="function">
    <text evidence="1">Scaffold protein that may play a role in cell adhesion, cell spreading and in the reorganization of the actin cytoskeleton. Plays a role in the regulation of cell proliferation. May act as a tumor suppressor (By similarity).</text>
</comment>
<comment type="subunit">
    <text evidence="1 5">Interacts via LIM domain 1 with ZYX. Interacts (via LIM domain 3) with ENAH and VASP. Interacts with ALKBH4, talin, actin, alpha-actinin, GRIP1 and PXN (By similarity). Interacts (via LIM domain 2) with ACTL7A (via N-terminus). Heterodimer with ACTL7A; the heterodimer interacts with ENAH to form a heterotrimer.</text>
</comment>
<comment type="subcellular location">
    <subcellularLocation>
        <location evidence="1">Cytoplasm</location>
    </subcellularLocation>
    <subcellularLocation>
        <location evidence="1">Cell junction</location>
        <location evidence="1">Focal adhesion</location>
    </subcellularLocation>
    <text evidence="1">Detected along actin stress fibers.</text>
</comment>
<comment type="domain">
    <text evidence="1">The N-terminal and the C-terminal halves of the protein can associate with each other, thereby hindering interactions with ZYX.</text>
</comment>
<comment type="similarity">
    <text evidence="6">Belongs to the prickle / espinas / testin family.</text>
</comment>
<feature type="chain" id="PRO_0000278802" description="Testin">
    <location>
        <begin position="1"/>
        <end position="419"/>
    </location>
</feature>
<feature type="domain" description="PET" evidence="3">
    <location>
        <begin position="92"/>
        <end position="199"/>
    </location>
</feature>
<feature type="domain" description="LIM zinc-binding 1" evidence="2">
    <location>
        <begin position="232"/>
        <end position="295"/>
    </location>
</feature>
<feature type="domain" description="LIM zinc-binding 2" evidence="2">
    <location>
        <begin position="297"/>
        <end position="357"/>
    </location>
</feature>
<feature type="domain" description="LIM zinc-binding 3" evidence="2">
    <location>
        <begin position="360"/>
        <end position="419"/>
    </location>
</feature>
<feature type="region of interest" description="Disordered" evidence="4">
    <location>
        <begin position="133"/>
        <end position="164"/>
    </location>
</feature>
<feature type="region of interest" description="Disordered" evidence="4">
    <location>
        <begin position="199"/>
        <end position="222"/>
    </location>
</feature>
<feature type="compositionally biased region" description="Basic and acidic residues" evidence="4">
    <location>
        <begin position="155"/>
        <end position="164"/>
    </location>
</feature>
<sequence length="419" mass="47632">MDLETKMKKMGLGHEQGFGAPCLKCKENCEGFELHFWRKICRNCKCGQEEHDVLLSTEEDRKVGRLFEDTKYTTLIAKLKSDGIPMYKRNVMILTNPVAAKKNVSINTVTYEWAPPVQNQALARQYMQMLPKEKQPVAGSEGAQYRKKQLAKQLPAHDQDPSKCHELSPKEVKEMEQFVKKYKSEALGVGDVKLPSEMNAQGDKVHNPAGDRNTPAAVGSKDKSAEAKKTQYSCYCCKNTMREGDPAIYAERAGYDKLWHPACFICSTCGELLVDMIYFWKNGKLYCGRHYCDSEKPRCAGCDELIFSNEYTQAENQNWHLKHFCCFDCDNILAGKIYVMVRDKPVCKPCYVKNHAVVCQGCHNAIDPEVQRVTYNNFSWHASTECFLCSCCSKCLIGQKFMPVEGMVFCSVECKKMMS</sequence>
<reference key="1">
    <citation type="submission" date="2005-12" db="EMBL/GenBank/DDBJ databases">
        <authorList>
            <person name="Seo Y.M."/>
            <person name="Jang S.J."/>
            <person name="Chun S.Y."/>
        </authorList>
    </citation>
    <scope>NUCLEOTIDE SEQUENCE [MRNA]</scope>
    <source>
        <strain>Sprague-Dawley</strain>
        <tissue>Ovary</tissue>
    </source>
</reference>
<reference key="2">
    <citation type="journal article" date="2003" name="Nature">
        <title>Comparative analyses of multi-species sequences from targeted genomic regions.</title>
        <authorList>
            <person name="Thomas J.W."/>
            <person name="Touchman J.W."/>
            <person name="Blakesley R.W."/>
            <person name="Bouffard G.G."/>
            <person name="Beckstrom-Sternberg S.M."/>
            <person name="Margulies E.H."/>
            <person name="Blanchette M."/>
            <person name="Siepel A.C."/>
            <person name="Thomas P.J."/>
            <person name="McDowell J.C."/>
            <person name="Maskeri B."/>
            <person name="Hansen N.F."/>
            <person name="Schwartz M.S."/>
            <person name="Weber R.J."/>
            <person name="Kent W.J."/>
            <person name="Karolchik D."/>
            <person name="Bruen T.C."/>
            <person name="Bevan R."/>
            <person name="Cutler D.J."/>
            <person name="Schwartz S."/>
            <person name="Elnitski L."/>
            <person name="Idol J.R."/>
            <person name="Prasad A.B."/>
            <person name="Lee-Lin S.-Q."/>
            <person name="Maduro V.V.B."/>
            <person name="Summers T.J."/>
            <person name="Portnoy M.E."/>
            <person name="Dietrich N.L."/>
            <person name="Akhter N."/>
            <person name="Ayele K."/>
            <person name="Benjamin B."/>
            <person name="Cariaga K."/>
            <person name="Brinkley C.P."/>
            <person name="Brooks S.Y."/>
            <person name="Granite S."/>
            <person name="Guan X."/>
            <person name="Gupta J."/>
            <person name="Haghighi P."/>
            <person name="Ho S.-L."/>
            <person name="Huang M.C."/>
            <person name="Karlins E."/>
            <person name="Laric P.L."/>
            <person name="Legaspi R."/>
            <person name="Lim M.J."/>
            <person name="Maduro Q.L."/>
            <person name="Masiello C.A."/>
            <person name="Mastrian S.D."/>
            <person name="McCloskey J.C."/>
            <person name="Pearson R."/>
            <person name="Stantripop S."/>
            <person name="Tiongson E.E."/>
            <person name="Tran J.T."/>
            <person name="Tsurgeon C."/>
            <person name="Vogt J.L."/>
            <person name="Walker M.A."/>
            <person name="Wetherby K.D."/>
            <person name="Wiggins L.S."/>
            <person name="Young A.C."/>
            <person name="Zhang L.-H."/>
            <person name="Osoegawa K."/>
            <person name="Zhu B."/>
            <person name="Zhao B."/>
            <person name="Shu C.L."/>
            <person name="De Jong P.J."/>
            <person name="Lawrence C.E."/>
            <person name="Smit A.F."/>
            <person name="Chakravarti A."/>
            <person name="Haussler D."/>
            <person name="Green P."/>
            <person name="Miller W."/>
            <person name="Green E.D."/>
        </authorList>
    </citation>
    <scope>NUCLEOTIDE SEQUENCE [LARGE SCALE GENOMIC DNA]</scope>
</reference>
<reference key="3">
    <citation type="journal article" date="2004" name="Genome Res.">
        <title>The status, quality, and expansion of the NIH full-length cDNA project: the Mammalian Gene Collection (MGC).</title>
        <authorList>
            <consortium name="The MGC Project Team"/>
        </authorList>
    </citation>
    <scope>NUCLEOTIDE SEQUENCE [LARGE SCALE MRNA]</scope>
    <source>
        <tissue>Lung</tissue>
    </source>
</reference>
<reference key="4">
    <citation type="journal article" date="2011" name="J. Biol. Chem.">
        <title>Molecular recognition of the Tes LIM2-3 domains by the actin-related protein Arp7A.</title>
        <authorList>
            <person name="Boeda B."/>
            <person name="Knowles P.P."/>
            <person name="Briggs D.C."/>
            <person name="Murray-Rust J."/>
            <person name="Soriano E."/>
            <person name="Garvalov B.K."/>
            <person name="McDonald N.Q."/>
            <person name="Way M."/>
        </authorList>
    </citation>
    <scope>IDENTIFICATION IN A COMPLEX WITH ENAH AND ACTL7A</scope>
    <scope>SUBUNIT</scope>
</reference>